<name>VBHT_BARSR</name>
<evidence type="ECO:0000255" key="1">
    <source>
        <dbReference type="PROSITE-ProRule" id="PRU00791"/>
    </source>
</evidence>
<evidence type="ECO:0000269" key="2">
    <source>
    </source>
</evidence>
<evidence type="ECO:0000269" key="3">
    <source>
    </source>
</evidence>
<evidence type="ECO:0000305" key="4"/>
<evidence type="ECO:0000305" key="5">
    <source>
    </source>
</evidence>
<evidence type="ECO:0007829" key="6">
    <source>
        <dbReference type="PDB" id="3SHG"/>
    </source>
</evidence>
<keyword id="KW-0002">3D-structure</keyword>
<keyword id="KW-0067">ATP-binding</keyword>
<keyword id="KW-0547">Nucleotide-binding</keyword>
<keyword id="KW-0548">Nucleotidyltransferase</keyword>
<keyword id="KW-1277">Toxin-antitoxin system</keyword>
<keyword id="KW-0808">Transferase</keyword>
<keyword id="KW-0843">Virulence</keyword>
<sequence>MRKYEGSNDPYTDPETGVMYNLLGIKDQARLERVESAFAYIRSFELGRTSISGKFDLDHMKKIHKKLFGDVYEWAGKTRLVDIVKDNSKFAHYTQIESYAPQITQQLAREQHLRGLDANEFSQRAGYYMGELNALHPFREGNGRTLREFIWQLAREAGYHIDWDRVERQEMTRASIESYYGNSDLMSALIRRNLTEFTVNRRVDVSQGINERVLSHIDIDKEWPQKGFNIAIQTTQQAPYLSSYTDTSNLEEKAQNALRNEQSYVDTFKELNDHLKTIYKDPQAAALKIEQTILAGKGDKLPDILAKAPNKVGELRGSDRLIDKLKSAGKERKAALYNVPLAISTIRRLQSFYKNSYEKHMDKLTREREQLKVEVPSLSQEAVAYMKNVEVGRNNYSKIPENINKEFVQLESALNRRFGKDVIYKRNFNLSKEIASKQTYDKKLVNELQTAIKFLQQRHIQKQNNLAITRTPSKGITR</sequence>
<accession>E6Z0R3</accession>
<dbReference type="EC" id="2.7.7.108" evidence="2 3"/>
<dbReference type="EMBL" id="FN645515">
    <property type="protein sequence ID" value="CBI82701.1"/>
    <property type="molecule type" value="Genomic_DNA"/>
</dbReference>
<dbReference type="RefSeq" id="WP_153302026.1">
    <property type="nucleotide sequence ID" value="NZ_CP019790.1"/>
</dbReference>
<dbReference type="PDB" id="3SHG">
    <property type="method" value="X-ray"/>
    <property type="resolution" value="1.50 A"/>
    <property type="chains" value="A=2-198"/>
</dbReference>
<dbReference type="PDB" id="3ZC7">
    <property type="method" value="X-ray"/>
    <property type="resolution" value="2.10 A"/>
    <property type="chains" value="A=1-248"/>
</dbReference>
<dbReference type="PDB" id="3ZCB">
    <property type="method" value="X-ray"/>
    <property type="resolution" value="1.94 A"/>
    <property type="chains" value="A=1-198"/>
</dbReference>
<dbReference type="PDBsum" id="3SHG"/>
<dbReference type="PDBsum" id="3ZC7"/>
<dbReference type="PDBsum" id="3ZCB"/>
<dbReference type="SMR" id="E6Z0R3"/>
<dbReference type="DIP" id="DIP-60136N"/>
<dbReference type="IntAct" id="E6Z0R3">
    <property type="interactions" value="1"/>
</dbReference>
<dbReference type="BRENDA" id="2.7.7.B23">
    <property type="organism ID" value="14828"/>
</dbReference>
<dbReference type="EvolutionaryTrace" id="E6Z0R3"/>
<dbReference type="GO" id="GO:0070733">
    <property type="term" value="F:AMPylase activity"/>
    <property type="evidence" value="ECO:0000314"/>
    <property type="project" value="UniProtKB"/>
</dbReference>
<dbReference type="GO" id="GO:0005524">
    <property type="term" value="F:ATP binding"/>
    <property type="evidence" value="ECO:0000314"/>
    <property type="project" value="UniProtKB"/>
</dbReference>
<dbReference type="GO" id="GO:0000287">
    <property type="term" value="F:magnesium ion binding"/>
    <property type="evidence" value="ECO:0000314"/>
    <property type="project" value="UniProtKB"/>
</dbReference>
<dbReference type="GO" id="GO:0042803">
    <property type="term" value="F:protein homodimerization activity"/>
    <property type="evidence" value="ECO:0000314"/>
    <property type="project" value="UniProtKB"/>
</dbReference>
<dbReference type="GO" id="GO:0018117">
    <property type="term" value="P:protein adenylylation"/>
    <property type="evidence" value="ECO:0000314"/>
    <property type="project" value="UniProtKB"/>
</dbReference>
<dbReference type="GO" id="GO:0051302">
    <property type="term" value="P:regulation of cell division"/>
    <property type="evidence" value="ECO:0007669"/>
    <property type="project" value="TreeGrafter"/>
</dbReference>
<dbReference type="Gene3D" id="1.10.3290.10">
    <property type="entry name" value="Fido-like domain"/>
    <property type="match status" value="1"/>
</dbReference>
<dbReference type="InterPro" id="IPR041533">
    <property type="entry name" value="Bep_BID"/>
</dbReference>
<dbReference type="InterPro" id="IPR003812">
    <property type="entry name" value="Fido"/>
</dbReference>
<dbReference type="InterPro" id="IPR036597">
    <property type="entry name" value="Fido-like_dom_sf"/>
</dbReference>
<dbReference type="PANTHER" id="PTHR39560">
    <property type="entry name" value="PROTEIN ADENYLYLTRANSFERASE FIC-RELATED"/>
    <property type="match status" value="1"/>
</dbReference>
<dbReference type="PANTHER" id="PTHR39560:SF1">
    <property type="entry name" value="PROTEIN ADENYLYLTRANSFERASE FIC-RELATED"/>
    <property type="match status" value="1"/>
</dbReference>
<dbReference type="Pfam" id="PF17841">
    <property type="entry name" value="Bep_C_terminal"/>
    <property type="match status" value="1"/>
</dbReference>
<dbReference type="Pfam" id="PF02661">
    <property type="entry name" value="Fic"/>
    <property type="match status" value="1"/>
</dbReference>
<dbReference type="SUPFAM" id="SSF140931">
    <property type="entry name" value="Fic-like"/>
    <property type="match status" value="1"/>
</dbReference>
<dbReference type="PROSITE" id="PS51459">
    <property type="entry name" value="FIDO"/>
    <property type="match status" value="1"/>
</dbReference>
<organism>
    <name type="scientific">Bartonella schoenbuchensis (strain DSM 13525 / NCTC 13165 / R1)</name>
    <dbReference type="NCBI Taxonomy" id="687861"/>
    <lineage>
        <taxon>Bacteria</taxon>
        <taxon>Pseudomonadati</taxon>
        <taxon>Pseudomonadota</taxon>
        <taxon>Alphaproteobacteria</taxon>
        <taxon>Hyphomicrobiales</taxon>
        <taxon>Bartonellaceae</taxon>
        <taxon>Bartonella</taxon>
    </lineage>
</organism>
<reference key="1">
    <citation type="journal article" date="2011" name="PLoS Genet.">
        <title>Parallel evolution of a type IV secretion system in radiating lineages of the host-restricted bacterial pathogen Bartonella.</title>
        <authorList>
            <person name="Engel P."/>
            <person name="Salzburger W."/>
            <person name="Liesch M."/>
            <person name="Chang C.C."/>
            <person name="Maruyama S."/>
            <person name="Lanz C."/>
            <person name="Calteau A."/>
            <person name="Lajus A."/>
            <person name="Medigue C."/>
            <person name="Schuster S.C."/>
            <person name="Dehio C."/>
        </authorList>
    </citation>
    <scope>NUCLEOTIDE SEQUENCE [LARGE SCALE GENOMIC DNA]</scope>
    <source>
        <strain>DSM 13525 / NCTC 13165 / R1</strain>
    </source>
</reference>
<reference key="2">
    <citation type="journal article" date="2012" name="Nature">
        <title>Adenylylation control by intra- or intermolecular active-site obstruction in Fic proteins.</title>
        <authorList>
            <person name="Engel P."/>
            <person name="Goepfert A."/>
            <person name="Stanger F.V."/>
            <person name="Harms A."/>
            <person name="Schmidt A."/>
            <person name="Schirmer T."/>
            <person name="Dehio C."/>
        </authorList>
    </citation>
    <scope>X-RAY CRYSTALLOGRAPHY (1.5 ANGSTROMS) OF 2-198 IN COMPLEX WITH VBHA</scope>
    <scope>CATALYTIC ACTIVITY</scope>
    <scope>ACTIVITY REGULATION</scope>
    <scope>INTERACTION WITH VBHA</scope>
    <scope>MUTAGENESIS OF HIS-136</scope>
    <source>
        <strain>DSM 13525 / NCTC 13165 / R1</strain>
    </source>
</reference>
<reference key="3">
    <citation type="journal article" date="2013" name="PLoS ONE">
        <title>Conserved inhibitory mechanism and competent ATP binding mode for adenylyltransferases with Fic fold.</title>
        <authorList>
            <person name="Goepfert A."/>
            <person name="Stanger F.V."/>
            <person name="Dehio C."/>
            <person name="Schirmer T."/>
        </authorList>
    </citation>
    <scope>X-RAY CRYSTALLOGRAPHY (1.94 ANGSTROMS) OF 1-198 IN COMPLEXES WITH MUTANT VBHA ANTITOXIN; ATP AND MAGNESIUM</scope>
    <scope>CATALYTIC ACTIVITY</scope>
    <scope>SUBUNIT</scope>
</reference>
<proteinExistence type="evidence at protein level"/>
<protein>
    <recommendedName>
        <fullName>Protein adenylyltransferase VbhT</fullName>
        <ecNumber evidence="2 3">2.7.7.108</ecNumber>
    </recommendedName>
    <alternativeName>
        <fullName>AMPylator VbhT</fullName>
    </alternativeName>
    <alternativeName>
        <fullName evidence="4">Toxin VbhT</fullName>
    </alternativeName>
</protein>
<feature type="chain" id="PRO_0000417549" description="Protein adenylyltransferase VbhT">
    <location>
        <begin position="1"/>
        <end position="478"/>
    </location>
</feature>
<feature type="domain" description="Fido" evidence="1">
    <location>
        <begin position="55"/>
        <end position="200"/>
    </location>
</feature>
<feature type="binding site">
    <location>
        <begin position="85"/>
        <end position="88"/>
    </location>
    <ligand>
        <name>ATP</name>
        <dbReference type="ChEBI" id="CHEBI:30616"/>
    </ligand>
</feature>
<feature type="binding site">
    <location>
        <begin position="133"/>
        <end position="136"/>
    </location>
    <ligand>
        <name>ATP</name>
        <dbReference type="ChEBI" id="CHEBI:30616"/>
    </ligand>
</feature>
<feature type="binding site">
    <location>
        <begin position="140"/>
        <end position="147"/>
    </location>
    <ligand>
        <name>ATP</name>
        <dbReference type="ChEBI" id="CHEBI:30616"/>
    </ligand>
</feature>
<feature type="binding site">
    <location>
        <position position="175"/>
    </location>
    <ligand>
        <name>ATP</name>
        <dbReference type="ChEBI" id="CHEBI:30616"/>
    </ligand>
</feature>
<feature type="mutagenesis site" description="Abolishes adenylyltransferase activity." evidence="2">
    <original>H</original>
    <variation>A</variation>
    <location>
        <position position="136"/>
    </location>
</feature>
<feature type="helix" evidence="6">
    <location>
        <begin position="6"/>
        <end position="8"/>
    </location>
</feature>
<feature type="turn" evidence="6">
    <location>
        <begin position="14"/>
        <end position="16"/>
    </location>
</feature>
<feature type="helix" evidence="6">
    <location>
        <begin position="28"/>
        <end position="48"/>
    </location>
</feature>
<feature type="helix" evidence="6">
    <location>
        <begin position="57"/>
        <end position="68"/>
    </location>
</feature>
<feature type="turn" evidence="6">
    <location>
        <begin position="69"/>
        <end position="71"/>
    </location>
</feature>
<feature type="turn" evidence="6">
    <location>
        <begin position="73"/>
        <end position="76"/>
    </location>
</feature>
<feature type="helix" evidence="6">
    <location>
        <begin position="93"/>
        <end position="95"/>
    </location>
</feature>
<feature type="helix" evidence="6">
    <location>
        <begin position="96"/>
        <end position="109"/>
    </location>
</feature>
<feature type="helix" evidence="6">
    <location>
        <begin position="111"/>
        <end position="113"/>
    </location>
</feature>
<feature type="helix" evidence="6">
    <location>
        <begin position="118"/>
        <end position="135"/>
    </location>
</feature>
<feature type="strand" evidence="6">
    <location>
        <begin position="138"/>
        <end position="140"/>
    </location>
</feature>
<feature type="helix" evidence="6">
    <location>
        <begin position="142"/>
        <end position="156"/>
    </location>
</feature>
<feature type="strand" evidence="6">
    <location>
        <begin position="159"/>
        <end position="161"/>
    </location>
</feature>
<feature type="helix" evidence="6">
    <location>
        <begin position="168"/>
        <end position="179"/>
    </location>
</feature>
<feature type="helix" evidence="6">
    <location>
        <begin position="184"/>
        <end position="192"/>
    </location>
</feature>
<feature type="strand" evidence="6">
    <location>
        <begin position="194"/>
        <end position="196"/>
    </location>
</feature>
<gene>
    <name type="primary">vbhT</name>
    <name type="ORF">B11C_100026</name>
</gene>
<comment type="function">
    <text>Toxic component of type II toxin-antitoxin (TA) system VbhT-VbhA. Adenylyltransferase involved in virulence by mediating the addition of adenosine 5'-monophosphate (AMP) to specific residue of host GTPases. The resulting AMPylation affects GTPases, impairing actin assembly in infected cells.</text>
</comment>
<comment type="catalytic activity">
    <reaction evidence="2 3">
        <text>L-tyrosyl-[protein] + ATP = O-(5'-adenylyl)-L-tyrosyl-[protein] + diphosphate</text>
        <dbReference type="Rhea" id="RHEA:54288"/>
        <dbReference type="Rhea" id="RHEA-COMP:10136"/>
        <dbReference type="Rhea" id="RHEA-COMP:13846"/>
        <dbReference type="ChEBI" id="CHEBI:30616"/>
        <dbReference type="ChEBI" id="CHEBI:33019"/>
        <dbReference type="ChEBI" id="CHEBI:46858"/>
        <dbReference type="ChEBI" id="CHEBI:83624"/>
        <dbReference type="EC" id="2.7.7.108"/>
    </reaction>
</comment>
<comment type="catalytic activity">
    <reaction evidence="2 3">
        <text>L-threonyl-[protein] + ATP = 3-O-(5'-adenylyl)-L-threonyl-[protein] + diphosphate</text>
        <dbReference type="Rhea" id="RHEA:54292"/>
        <dbReference type="Rhea" id="RHEA-COMP:11060"/>
        <dbReference type="Rhea" id="RHEA-COMP:13847"/>
        <dbReference type="ChEBI" id="CHEBI:30013"/>
        <dbReference type="ChEBI" id="CHEBI:30616"/>
        <dbReference type="ChEBI" id="CHEBI:33019"/>
        <dbReference type="ChEBI" id="CHEBI:138113"/>
        <dbReference type="EC" id="2.7.7.108"/>
    </reaction>
</comment>
<comment type="activity regulation">
    <text evidence="2">Adenylyltransferase activity is inhibited by antitoxin VbhA; which acts by competing with ATP-binding at Arg-147 and prevents productive ATP-binding.</text>
</comment>
<comment type="subunit">
    <text evidence="2 3">Homodimer. Interacts with VbhA.</text>
</comment>
<comment type="interaction">
    <interactant intactId="EBI-15965345">
        <id>E6Z0R3</id>
    </interactant>
    <interactant intactId="EBI-15965363">
        <id>E6Z0R4</id>
        <label>B11C_100027</label>
    </interactant>
    <organismsDiffer>false</organismsDiffer>
    <experiments>2</experiments>
</comment>
<comment type="domain">
    <text>The fido domain mediates the adenylyltransferase activity.</text>
</comment>
<comment type="miscellaneous">
    <text evidence="5">Defined as class I fido-domain containing proteins, in which the inhibitory helix is provided by an interacting antitoxin (VbhA).</text>
</comment>